<evidence type="ECO:0000255" key="1">
    <source>
        <dbReference type="HAMAP-Rule" id="MF_00429"/>
    </source>
</evidence>
<reference key="1">
    <citation type="submission" date="2007-02" db="EMBL/GenBank/DDBJ databases">
        <title>Complete sequence of chromosome of Yersinia pestis Pestoides F.</title>
        <authorList>
            <consortium name="US DOE Joint Genome Institute"/>
            <person name="Copeland A."/>
            <person name="Lucas S."/>
            <person name="Lapidus A."/>
            <person name="Barry K."/>
            <person name="Detter J.C."/>
            <person name="Glavina del Rio T."/>
            <person name="Hammon N."/>
            <person name="Israni S."/>
            <person name="Dalin E."/>
            <person name="Tice H."/>
            <person name="Pitluck S."/>
            <person name="Di Bartolo G."/>
            <person name="Chain P."/>
            <person name="Malfatti S."/>
            <person name="Shin M."/>
            <person name="Vergez L."/>
            <person name="Schmutz J."/>
            <person name="Larimer F."/>
            <person name="Land M."/>
            <person name="Hauser L."/>
            <person name="Worsham P."/>
            <person name="Chu M."/>
            <person name="Bearden S."/>
            <person name="Garcia E."/>
            <person name="Richardson P."/>
        </authorList>
    </citation>
    <scope>NUCLEOTIDE SEQUENCE [LARGE SCALE GENOMIC DNA]</scope>
    <source>
        <strain>Pestoides F</strain>
    </source>
</reference>
<keyword id="KW-0997">Cell inner membrane</keyword>
<keyword id="KW-1003">Cell membrane</keyword>
<keyword id="KW-0406">Ion transport</keyword>
<keyword id="KW-0472">Membrane</keyword>
<keyword id="KW-0520">NAD</keyword>
<keyword id="KW-0915">Sodium</keyword>
<keyword id="KW-0739">Sodium transport</keyword>
<keyword id="KW-1278">Translocase</keyword>
<keyword id="KW-0812">Transmembrane</keyword>
<keyword id="KW-1133">Transmembrane helix</keyword>
<keyword id="KW-0813">Transport</keyword>
<keyword id="KW-0830">Ubiquinone</keyword>
<feature type="chain" id="PRO_1000060220" description="Na(+)-translocating NADH-quinone reductase subunit E">
    <location>
        <begin position="1"/>
        <end position="198"/>
    </location>
</feature>
<feature type="transmembrane region" description="Helical" evidence="1">
    <location>
        <begin position="11"/>
        <end position="31"/>
    </location>
</feature>
<feature type="transmembrane region" description="Helical" evidence="1">
    <location>
        <begin position="35"/>
        <end position="55"/>
    </location>
</feature>
<feature type="transmembrane region" description="Helical" evidence="1">
    <location>
        <begin position="77"/>
        <end position="97"/>
    </location>
</feature>
<feature type="transmembrane region" description="Helical" evidence="1">
    <location>
        <begin position="109"/>
        <end position="129"/>
    </location>
</feature>
<feature type="transmembrane region" description="Helical" evidence="1">
    <location>
        <begin position="140"/>
        <end position="160"/>
    </location>
</feature>
<feature type="transmembrane region" description="Helical" evidence="1">
    <location>
        <begin position="176"/>
        <end position="196"/>
    </location>
</feature>
<sequence length="198" mass="21246">MEHYISLLVRAVFVENMALAFFLGMCTFLAVSKKVSTAFGLGIAVTVVLGISVPANNLVYNLVLRDGALVEGVDLSFLNFITFIGVIAAIVQVLEMILDRYFPALYNALGIFLPLITVNCAIFGGVSFMAQRDYNFPESIVYGFGSGMGWMLAIVALAGIREKMKYANVPAGLQGLGITFISTGLMALGFMSFAGVNL</sequence>
<dbReference type="EC" id="7.2.1.1" evidence="1"/>
<dbReference type="EMBL" id="CP000668">
    <property type="protein sequence ID" value="ABP41225.1"/>
    <property type="molecule type" value="Genomic_DNA"/>
</dbReference>
<dbReference type="PIR" id="AC0393">
    <property type="entry name" value="AC0393"/>
</dbReference>
<dbReference type="RefSeq" id="WP_002208713.1">
    <property type="nucleotide sequence ID" value="NZ_CP009715.1"/>
</dbReference>
<dbReference type="SMR" id="A4TPL3"/>
<dbReference type="GeneID" id="57975483"/>
<dbReference type="KEGG" id="ypp:YPDSF_2863"/>
<dbReference type="PATRIC" id="fig|386656.14.peg.127"/>
<dbReference type="GO" id="GO:0009276">
    <property type="term" value="C:Gram-negative-bacterium-type cell wall"/>
    <property type="evidence" value="ECO:0007669"/>
    <property type="project" value="InterPro"/>
</dbReference>
<dbReference type="GO" id="GO:0005886">
    <property type="term" value="C:plasma membrane"/>
    <property type="evidence" value="ECO:0007669"/>
    <property type="project" value="UniProtKB-SubCell"/>
</dbReference>
<dbReference type="GO" id="GO:0016655">
    <property type="term" value="F:oxidoreductase activity, acting on NAD(P)H, quinone or similar compound as acceptor"/>
    <property type="evidence" value="ECO:0007669"/>
    <property type="project" value="UniProtKB-UniRule"/>
</dbReference>
<dbReference type="GO" id="GO:0022904">
    <property type="term" value="P:respiratory electron transport chain"/>
    <property type="evidence" value="ECO:0007669"/>
    <property type="project" value="InterPro"/>
</dbReference>
<dbReference type="GO" id="GO:0006814">
    <property type="term" value="P:sodium ion transport"/>
    <property type="evidence" value="ECO:0007669"/>
    <property type="project" value="UniProtKB-UniRule"/>
</dbReference>
<dbReference type="HAMAP" id="MF_00429">
    <property type="entry name" value="NqrE"/>
    <property type="match status" value="1"/>
</dbReference>
<dbReference type="InterPro" id="IPR003667">
    <property type="entry name" value="NqrDE/RnfAE"/>
</dbReference>
<dbReference type="InterPro" id="IPR050133">
    <property type="entry name" value="NqrDE/RnfAE_oxidrdctase"/>
</dbReference>
<dbReference type="InterPro" id="IPR010967">
    <property type="entry name" value="NqrE"/>
</dbReference>
<dbReference type="NCBIfam" id="TIGR01940">
    <property type="entry name" value="nqrE"/>
    <property type="match status" value="1"/>
</dbReference>
<dbReference type="PANTHER" id="PTHR30335">
    <property type="entry name" value="INTEGRAL MEMBRANE PROTEIN OF SOXR-REDUCING COMPLEX"/>
    <property type="match status" value="1"/>
</dbReference>
<dbReference type="PANTHER" id="PTHR30335:SF1">
    <property type="entry name" value="NA(+)-TRANSLOCATING NADH-QUINONE REDUCTASE SUBUNIT E"/>
    <property type="match status" value="1"/>
</dbReference>
<dbReference type="Pfam" id="PF02508">
    <property type="entry name" value="Rnf-Nqr"/>
    <property type="match status" value="1"/>
</dbReference>
<dbReference type="PIRSF" id="PIRSF006102">
    <property type="entry name" value="NQR_DE"/>
    <property type="match status" value="1"/>
</dbReference>
<comment type="function">
    <text evidence="1">NQR complex catalyzes the reduction of ubiquinone-1 to ubiquinol by two successive reactions, coupled with the transport of Na(+) ions from the cytoplasm to the periplasm. NqrA to NqrE are probably involved in the second step, the conversion of ubisemiquinone to ubiquinol.</text>
</comment>
<comment type="catalytic activity">
    <reaction evidence="1">
        <text>a ubiquinone + n Na(+)(in) + NADH + H(+) = a ubiquinol + n Na(+)(out) + NAD(+)</text>
        <dbReference type="Rhea" id="RHEA:47748"/>
        <dbReference type="Rhea" id="RHEA-COMP:9565"/>
        <dbReference type="Rhea" id="RHEA-COMP:9566"/>
        <dbReference type="ChEBI" id="CHEBI:15378"/>
        <dbReference type="ChEBI" id="CHEBI:16389"/>
        <dbReference type="ChEBI" id="CHEBI:17976"/>
        <dbReference type="ChEBI" id="CHEBI:29101"/>
        <dbReference type="ChEBI" id="CHEBI:57540"/>
        <dbReference type="ChEBI" id="CHEBI:57945"/>
        <dbReference type="EC" id="7.2.1.1"/>
    </reaction>
</comment>
<comment type="subunit">
    <text evidence="1">Composed of six subunits; NqrA, NqrB, NqrC, NqrD, NqrE and NqrF.</text>
</comment>
<comment type="subcellular location">
    <subcellularLocation>
        <location evidence="1">Cell inner membrane</location>
        <topology evidence="1">Multi-pass membrane protein</topology>
    </subcellularLocation>
</comment>
<comment type="similarity">
    <text evidence="1">Belongs to the NqrDE/RnfAE family.</text>
</comment>
<proteinExistence type="inferred from homology"/>
<name>NQRE_YERPP</name>
<accession>A4TPL3</accession>
<gene>
    <name evidence="1" type="primary">nqrE</name>
    <name type="ordered locus">YPDSF_2863</name>
</gene>
<protein>
    <recommendedName>
        <fullName evidence="1">Na(+)-translocating NADH-quinone reductase subunit E</fullName>
        <shortName evidence="1">Na(+)-NQR subunit E</shortName>
        <shortName evidence="1">Na(+)-translocating NQR subunit E</shortName>
        <ecNumber evidence="1">7.2.1.1</ecNumber>
    </recommendedName>
    <alternativeName>
        <fullName evidence="1">NQR complex subunit E</fullName>
    </alternativeName>
    <alternativeName>
        <fullName evidence="1">NQR-1 subunit E</fullName>
    </alternativeName>
</protein>
<organism>
    <name type="scientific">Yersinia pestis (strain Pestoides F)</name>
    <dbReference type="NCBI Taxonomy" id="386656"/>
    <lineage>
        <taxon>Bacteria</taxon>
        <taxon>Pseudomonadati</taxon>
        <taxon>Pseudomonadota</taxon>
        <taxon>Gammaproteobacteria</taxon>
        <taxon>Enterobacterales</taxon>
        <taxon>Yersiniaceae</taxon>
        <taxon>Yersinia</taxon>
    </lineage>
</organism>